<proteinExistence type="evidence at protein level"/>
<name>ACL7B_MOUSE</name>
<organism>
    <name type="scientific">Mus musculus</name>
    <name type="common">Mouse</name>
    <dbReference type="NCBI Taxonomy" id="10090"/>
    <lineage>
        <taxon>Eukaryota</taxon>
        <taxon>Metazoa</taxon>
        <taxon>Chordata</taxon>
        <taxon>Craniata</taxon>
        <taxon>Vertebrata</taxon>
        <taxon>Euteleostomi</taxon>
        <taxon>Mammalia</taxon>
        <taxon>Eutheria</taxon>
        <taxon>Euarchontoglires</taxon>
        <taxon>Glires</taxon>
        <taxon>Rodentia</taxon>
        <taxon>Myomorpha</taxon>
        <taxon>Muroidea</taxon>
        <taxon>Muridae</taxon>
        <taxon>Murinae</taxon>
        <taxon>Mus</taxon>
        <taxon>Mus</taxon>
    </lineage>
</organism>
<dbReference type="EMBL" id="AF113520">
    <property type="protein sequence ID" value="AAF18299.1"/>
    <property type="molecule type" value="mRNA"/>
</dbReference>
<dbReference type="EMBL" id="AB023062">
    <property type="protein sequence ID" value="BAA90821.1"/>
    <property type="molecule type" value="mRNA"/>
</dbReference>
<dbReference type="EMBL" id="AB079643">
    <property type="protein sequence ID" value="BAC07296.1"/>
    <property type="molecule type" value="Genomic_DNA"/>
</dbReference>
<dbReference type="EMBL" id="AL807762">
    <property type="status" value="NOT_ANNOTATED_CDS"/>
    <property type="molecule type" value="Genomic_DNA"/>
</dbReference>
<dbReference type="EMBL" id="CH466565">
    <property type="protein sequence ID" value="EDL02259.1"/>
    <property type="molecule type" value="Genomic_DNA"/>
</dbReference>
<dbReference type="EMBL" id="BC116815">
    <property type="protein sequence ID" value="AAI16816.1"/>
    <property type="molecule type" value="mRNA"/>
</dbReference>
<dbReference type="EMBL" id="BC116817">
    <property type="protein sequence ID" value="AAI16818.1"/>
    <property type="molecule type" value="mRNA"/>
</dbReference>
<dbReference type="CCDS" id="CCDS18196.1"/>
<dbReference type="RefSeq" id="NP_079547.2">
    <property type="nucleotide sequence ID" value="NM_025271.2"/>
</dbReference>
<dbReference type="SMR" id="Q9QY83"/>
<dbReference type="FunCoup" id="Q9QY83">
    <property type="interactions" value="355"/>
</dbReference>
<dbReference type="STRING" id="10090.ENSMUSP00000092693"/>
<dbReference type="iPTMnet" id="Q9QY83"/>
<dbReference type="PhosphoSitePlus" id="Q9QY83"/>
<dbReference type="SwissPalm" id="Q9QY83"/>
<dbReference type="REPRODUCTION-2DPAGE" id="Q9QY83"/>
<dbReference type="PaxDb" id="10090-ENSMUSP00000092693"/>
<dbReference type="PeptideAtlas" id="Q9QY83"/>
<dbReference type="ProteomicsDB" id="285979"/>
<dbReference type="Antibodypedia" id="14908">
    <property type="antibodies" value="268 antibodies from 28 providers"/>
</dbReference>
<dbReference type="DNASU" id="11471"/>
<dbReference type="Ensembl" id="ENSMUST00000095080.5">
    <property type="protein sequence ID" value="ENSMUSP00000092693.4"/>
    <property type="gene ID" value="ENSMUSG00000070980.5"/>
</dbReference>
<dbReference type="GeneID" id="11471"/>
<dbReference type="KEGG" id="mmu:11471"/>
<dbReference type="UCSC" id="uc008sxn.1">
    <property type="organism name" value="mouse"/>
</dbReference>
<dbReference type="AGR" id="MGI:1343053"/>
<dbReference type="CTD" id="10880"/>
<dbReference type="MGI" id="MGI:1343053">
    <property type="gene designation" value="Actl7b"/>
</dbReference>
<dbReference type="VEuPathDB" id="HostDB:ENSMUSG00000070980"/>
<dbReference type="eggNOG" id="KOG0676">
    <property type="taxonomic scope" value="Eukaryota"/>
</dbReference>
<dbReference type="GeneTree" id="ENSGT00940000162582"/>
<dbReference type="HOGENOM" id="CLU_027965_0_2_1"/>
<dbReference type="InParanoid" id="Q9QY83"/>
<dbReference type="OMA" id="WDCVQNI"/>
<dbReference type="OrthoDB" id="9925380at2759"/>
<dbReference type="PhylomeDB" id="Q9QY83"/>
<dbReference type="TreeFam" id="TF354237"/>
<dbReference type="BioGRID-ORCS" id="11471">
    <property type="hits" value="1 hit in 77 CRISPR screens"/>
</dbReference>
<dbReference type="PRO" id="PR:Q9QY83"/>
<dbReference type="Proteomes" id="UP000000589">
    <property type="component" value="Chromosome 4"/>
</dbReference>
<dbReference type="RNAct" id="Q9QY83">
    <property type="molecule type" value="protein"/>
</dbReference>
<dbReference type="Bgee" id="ENSMUSG00000070980">
    <property type="expression patterns" value="Expressed in seminiferous tubule of testis and 25 other cell types or tissues"/>
</dbReference>
<dbReference type="GO" id="GO:0005737">
    <property type="term" value="C:cytoplasm"/>
    <property type="evidence" value="ECO:0000314"/>
    <property type="project" value="MGI"/>
</dbReference>
<dbReference type="GO" id="GO:0005856">
    <property type="term" value="C:cytoskeleton"/>
    <property type="evidence" value="ECO:0007669"/>
    <property type="project" value="UniProtKB-SubCell"/>
</dbReference>
<dbReference type="CDD" id="cd10214">
    <property type="entry name" value="ASKHA_NBD_ACTL7"/>
    <property type="match status" value="1"/>
</dbReference>
<dbReference type="FunFam" id="3.90.640.10:FF:000007">
    <property type="entry name" value="Actin like 7B"/>
    <property type="match status" value="1"/>
</dbReference>
<dbReference type="FunFam" id="3.30.420.40:FF:000050">
    <property type="entry name" value="Actin, alpha skeletal muscle"/>
    <property type="match status" value="1"/>
</dbReference>
<dbReference type="Gene3D" id="3.30.420.40">
    <property type="match status" value="2"/>
</dbReference>
<dbReference type="Gene3D" id="3.90.640.10">
    <property type="entry name" value="Actin, Chain A, domain 4"/>
    <property type="match status" value="1"/>
</dbReference>
<dbReference type="InterPro" id="IPR004000">
    <property type="entry name" value="Actin"/>
</dbReference>
<dbReference type="InterPro" id="IPR043129">
    <property type="entry name" value="ATPase_NBD"/>
</dbReference>
<dbReference type="PANTHER" id="PTHR11937">
    <property type="entry name" value="ACTIN"/>
    <property type="match status" value="1"/>
</dbReference>
<dbReference type="Pfam" id="PF00022">
    <property type="entry name" value="Actin"/>
    <property type="match status" value="1"/>
</dbReference>
<dbReference type="PRINTS" id="PR00190">
    <property type="entry name" value="ACTIN"/>
</dbReference>
<dbReference type="SMART" id="SM00268">
    <property type="entry name" value="ACTIN"/>
    <property type="match status" value="1"/>
</dbReference>
<dbReference type="SUPFAM" id="SSF53067">
    <property type="entry name" value="Actin-like ATPase domain"/>
    <property type="match status" value="2"/>
</dbReference>
<keyword id="KW-0963">Cytoplasm</keyword>
<keyword id="KW-0206">Cytoskeleton</keyword>
<keyword id="KW-0597">Phosphoprotein</keyword>
<keyword id="KW-1185">Reference proteome</keyword>
<gene>
    <name type="primary">Actl7b</name>
    <name type="synonym">Tact1</name>
</gene>
<evidence type="ECO:0000250" key="1"/>
<evidence type="ECO:0000250" key="2">
    <source>
        <dbReference type="UniProtKB" id="Q4QR76"/>
    </source>
</evidence>
<evidence type="ECO:0000256" key="3">
    <source>
        <dbReference type="SAM" id="MobiDB-lite"/>
    </source>
</evidence>
<evidence type="ECO:0000305" key="4"/>
<comment type="subcellular location">
    <subcellularLocation>
        <location evidence="1">Cytoplasm</location>
        <location evidence="1">Cytoskeleton</location>
    </subcellularLocation>
</comment>
<comment type="tissue specificity">
    <text>Testis specific.</text>
</comment>
<comment type="similarity">
    <text evidence="4">Belongs to the actin family.</text>
</comment>
<reference key="1">
    <citation type="journal article" date="1999" name="Genomics">
        <title>Cloning, mapping, and expression of two novel actin genes, actin-like-7A (ACTL7A) and actin-like-7B (ACTL7B), from the familial dysautonomia candidate region on 9q31.</title>
        <authorList>
            <person name="Chadwick B.P."/>
            <person name="Mull J."/>
            <person name="Helbling L.A."/>
            <person name="Gill S."/>
            <person name="Leyne M."/>
            <person name="Robbins C.M."/>
            <person name="Pinkett H.W."/>
            <person name="Makalowska I."/>
            <person name="Maayan C."/>
            <person name="Blumenfeld A."/>
            <person name="Axelrod F.B."/>
            <person name="Brownstein M."/>
            <person name="Gusella J.F."/>
            <person name="Slaugenhaupt S.A."/>
        </authorList>
    </citation>
    <scope>NUCLEOTIDE SEQUENCE [MRNA]</scope>
    <source>
        <strain>CD-1</strain>
        <tissue>Testis</tissue>
    </source>
</reference>
<reference key="2">
    <citation type="submission" date="1999-01" db="EMBL/GenBank/DDBJ databases">
        <title>Testis specific actin.</title>
        <authorList>
            <person name="Tanaka H."/>
            <person name="Iguchi N."/>
            <person name="Carvalho C.E."/>
            <person name="Nozaki M."/>
            <person name="Nishimune Y."/>
        </authorList>
    </citation>
    <scope>NUCLEOTIDE SEQUENCE [MRNA]</scope>
    <source>
        <tissue>Testis</tissue>
    </source>
</reference>
<reference key="3">
    <citation type="journal article" date="2003" name="Mol. Reprod. Dev.">
        <title>Genomic structure and promoter activity of the testis haploid germ cell-specific intronless genes, Tact1 and Tact2.</title>
        <authorList>
            <person name="Hisano M."/>
            <person name="Yamada S."/>
            <person name="Tanaka H."/>
            <person name="Nishimune Y."/>
            <person name="Nozaki M."/>
        </authorList>
    </citation>
    <scope>NUCLEOTIDE SEQUENCE [GENOMIC DNA]</scope>
    <source>
        <strain>129/Sv</strain>
        <tissue>Liver</tissue>
    </source>
</reference>
<reference key="4">
    <citation type="journal article" date="2009" name="PLoS Biol.">
        <title>Lineage-specific biology revealed by a finished genome assembly of the mouse.</title>
        <authorList>
            <person name="Church D.M."/>
            <person name="Goodstadt L."/>
            <person name="Hillier L.W."/>
            <person name="Zody M.C."/>
            <person name="Goldstein S."/>
            <person name="She X."/>
            <person name="Bult C.J."/>
            <person name="Agarwala R."/>
            <person name="Cherry J.L."/>
            <person name="DiCuccio M."/>
            <person name="Hlavina W."/>
            <person name="Kapustin Y."/>
            <person name="Meric P."/>
            <person name="Maglott D."/>
            <person name="Birtle Z."/>
            <person name="Marques A.C."/>
            <person name="Graves T."/>
            <person name="Zhou S."/>
            <person name="Teague B."/>
            <person name="Potamousis K."/>
            <person name="Churas C."/>
            <person name="Place M."/>
            <person name="Herschleb J."/>
            <person name="Runnheim R."/>
            <person name="Forrest D."/>
            <person name="Amos-Landgraf J."/>
            <person name="Schwartz D.C."/>
            <person name="Cheng Z."/>
            <person name="Lindblad-Toh K."/>
            <person name="Eichler E.E."/>
            <person name="Ponting C.P."/>
        </authorList>
    </citation>
    <scope>NUCLEOTIDE SEQUENCE [LARGE SCALE GENOMIC DNA]</scope>
    <source>
        <strain>C57BL/6J</strain>
    </source>
</reference>
<reference key="5">
    <citation type="submission" date="2005-09" db="EMBL/GenBank/DDBJ databases">
        <authorList>
            <person name="Mural R.J."/>
            <person name="Adams M.D."/>
            <person name="Myers E.W."/>
            <person name="Smith H.O."/>
            <person name="Venter J.C."/>
        </authorList>
    </citation>
    <scope>NUCLEOTIDE SEQUENCE [LARGE SCALE GENOMIC DNA]</scope>
</reference>
<reference key="6">
    <citation type="journal article" date="2004" name="Genome Res.">
        <title>The status, quality, and expansion of the NIH full-length cDNA project: the Mammalian Gene Collection (MGC).</title>
        <authorList>
            <consortium name="The MGC Project Team"/>
        </authorList>
    </citation>
    <scope>NUCLEOTIDE SEQUENCE [LARGE SCALE MRNA]</scope>
    <source>
        <tissue>Testis</tissue>
    </source>
</reference>
<reference key="7">
    <citation type="journal article" date="2010" name="Cell">
        <title>A tissue-specific atlas of mouse protein phosphorylation and expression.</title>
        <authorList>
            <person name="Huttlin E.L."/>
            <person name="Jedrychowski M.P."/>
            <person name="Elias J.E."/>
            <person name="Goswami T."/>
            <person name="Rad R."/>
            <person name="Beausoleil S.A."/>
            <person name="Villen J."/>
            <person name="Haas W."/>
            <person name="Sowa M.E."/>
            <person name="Gygi S.P."/>
        </authorList>
    </citation>
    <scope>IDENTIFICATION BY MASS SPECTROMETRY [LARGE SCALE ANALYSIS]</scope>
    <source>
        <tissue>Testis</tissue>
    </source>
</reference>
<accession>Q9QY83</accession>
<accession>Q14AJ4</accession>
<accession>Q9JMI6</accession>
<protein>
    <recommendedName>
        <fullName>Actin-like protein 7B</fullName>
    </recommendedName>
    <alternativeName>
        <fullName>Actin-like-7-beta</fullName>
    </alternativeName>
    <alternativeName>
        <fullName>Testis-specific actin-1</fullName>
        <shortName>T-actin-1</shortName>
    </alternativeName>
</protein>
<feature type="chain" id="PRO_0000089141" description="Actin-like protein 7B">
    <location>
        <begin position="1"/>
        <end position="418"/>
    </location>
</feature>
<feature type="region of interest" description="Disordered" evidence="3">
    <location>
        <begin position="1"/>
        <end position="42"/>
    </location>
</feature>
<feature type="modified residue" description="Phosphoserine" evidence="2">
    <location>
        <position position="8"/>
    </location>
</feature>
<feature type="sequence conflict" description="In Ref. 1; AAF18299." evidence="4" ref="1">
    <original>SA</original>
    <variation>RP</variation>
    <location>
        <begin position="85"/>
        <end position="86"/>
    </location>
</feature>
<sequence length="418" mass="45565">MATKNSPSPKPMGTAQGDPGEAGTLPAPEAAGIRDTGSTQLKTKPKKIRKIKALVIDLGSQYCKCGYAGEPRPTYFISSTVGKRSAEMAADAGDNFKETYVGHELLNMEASLKLVNPLKHGVVVDWDCIQNIWEYIFHTAMKIMPEEHAVLVSDPPLSPTSNREKYAELLFETFGIPAMHVTSQALLSIYSYGKTSGLVVESGHGVSHVVPISEGDLLPGLPSRVDYAGCDLTNYLMQLLNEAGHKFSDDHLHIIEHIKKKCCYAALLPEEEMSLGLDELHVDYELPDGKIITIGQERFRCSEMLFKPSLVGCTQPGLPELTATCLARCQGTGFKEEMAANVLLCGGCTMLDGFPERFQRELSLLCPGDSPTVAAAPERKTSVWTGGSILASLQAFQQLWVSKEEFEERGCAAIYSKC</sequence>